<sequence length="549" mass="61463">MARQKMFYNKLLGMLSVGFGFAWALENITIYEFDFGKGILDQSYGGVFSNNGPSQVQLRDAVLMNGTVVYDSNGAWDSSALEEWLQGQKKVSIEKIFENIGPSAVYPSISPGVVIASPSQTHPDYFYQWIRDSALTINSIVSHSAGPAIETLLQYLNVSFHLQRSNNTLGAGIGYTNDTVALGDPKWNVDNTAFTEDWGRPQNDGPALRSIAILKIIDYIKQSGTDLGAKYPFQSTADIFDDIVRWDLRFIIDHWNSSGFDLWEEVNGMHFFTLLVQLSAVDKSLSYFNASERSSPFVEELRQTRRDISKFLVDPANGFINGKYNYIVGTPMIADTLRSGLDISTLLAANTVHDAPSASHLPFDINDPAVLNTLHHLMLHMRSIYPINDSSKNATGIALGRYPEDVYDGYGFGEGNPWVLATCTASTTLYQLIYRHISEQHDLVVPMNNDCSNAFWSELVFSNLTTLGNDEGYLILEFNTPAFNQTIQKIFQLADSFLVKLKAHVGTDGELSEQFNKYTGFMQGAQHLTWSYTSFWDAYQIRQEVLQSL</sequence>
<feature type="chain" id="PRO_0000186120" description="Glucoamylase, intracellular sporulation-specific">
    <location>
        <begin position="1"/>
        <end position="549"/>
    </location>
</feature>
<feature type="active site" description="Proton acceptor" evidence="2">
    <location>
        <position position="261"/>
    </location>
</feature>
<feature type="active site" description="Proton donor" evidence="2">
    <location>
        <position position="264"/>
    </location>
</feature>
<feature type="binding site" evidence="1">
    <location>
        <position position="198"/>
    </location>
    <ligand>
        <name>substrate</name>
    </ligand>
</feature>
<feature type="sequence conflict" description="In Ref. 4; CAA32071." evidence="3" ref="4">
    <original>D</original>
    <variation>H</variation>
    <location>
        <position position="184"/>
    </location>
</feature>
<feature type="sequence conflict" description="In Ref. 1; AAA35042." evidence="3" ref="1">
    <original>HVGTDGELSEQFNKYTGFMQGAQHLTWSYTSFWDAYQIRQEVLQSL</original>
    <variation>TWEQTGN</variation>
    <location>
        <begin position="504"/>
        <end position="549"/>
    </location>
</feature>
<reference key="1">
    <citation type="journal article" date="1987" name="J. Bacteriol.">
        <title>Gene fusion is a possible mechanism underlying the evolution of STA1.</title>
        <authorList>
            <person name="Yamashita I."/>
            <person name="Nakamura M."/>
            <person name="Fukui S."/>
        </authorList>
    </citation>
    <scope>NUCLEOTIDE SEQUENCE [GENOMIC DNA]</scope>
</reference>
<reference key="2">
    <citation type="journal article" date="1997" name="Nature">
        <title>The nucleotide sequence of Saccharomyces cerevisiae chromosome IX.</title>
        <authorList>
            <person name="Churcher C.M."/>
            <person name="Bowman S."/>
            <person name="Badcock K."/>
            <person name="Bankier A.T."/>
            <person name="Brown D."/>
            <person name="Chillingworth T."/>
            <person name="Connor R."/>
            <person name="Devlin K."/>
            <person name="Gentles S."/>
            <person name="Hamlin N."/>
            <person name="Harris D.E."/>
            <person name="Horsnell T."/>
            <person name="Hunt S."/>
            <person name="Jagels K."/>
            <person name="Jones M."/>
            <person name="Lye G."/>
            <person name="Moule S."/>
            <person name="Odell C."/>
            <person name="Pearson D."/>
            <person name="Rajandream M.A."/>
            <person name="Rice P."/>
            <person name="Rowley N."/>
            <person name="Skelton J."/>
            <person name="Smith V."/>
            <person name="Walsh S.V."/>
            <person name="Whitehead S."/>
            <person name="Barrell B.G."/>
        </authorList>
    </citation>
    <scope>NUCLEOTIDE SEQUENCE [LARGE SCALE GENOMIC DNA]</scope>
    <source>
        <strain>ATCC 204508 / S288c</strain>
    </source>
</reference>
<reference key="3">
    <citation type="journal article" date="2014" name="G3 (Bethesda)">
        <title>The reference genome sequence of Saccharomyces cerevisiae: Then and now.</title>
        <authorList>
            <person name="Engel S.R."/>
            <person name="Dietrich F.S."/>
            <person name="Fisk D.G."/>
            <person name="Binkley G."/>
            <person name="Balakrishnan R."/>
            <person name="Costanzo M.C."/>
            <person name="Dwight S.S."/>
            <person name="Hitz B.C."/>
            <person name="Karra K."/>
            <person name="Nash R.S."/>
            <person name="Weng S."/>
            <person name="Wong E.D."/>
            <person name="Lloyd P."/>
            <person name="Skrzypek M.S."/>
            <person name="Miyasato S.R."/>
            <person name="Simison M."/>
            <person name="Cherry J.M."/>
        </authorList>
    </citation>
    <scope>GENOME REANNOTATION</scope>
    <source>
        <strain>ATCC 204508 / S288c</strain>
    </source>
</reference>
<reference key="4">
    <citation type="journal article" date="1988" name="FEBS Lett.">
        <title>Similar short elements in the 5' regions of the STA2 and SGA genes from Saccharomyces cerevisiae.</title>
        <authorList>
            <person name="Pardo J.M."/>
            <person name="Ianez E."/>
            <person name="Zalacain M."/>
            <person name="Claros M.G."/>
            <person name="Jimenez A."/>
        </authorList>
    </citation>
    <scope>NUCLEOTIDE SEQUENCE [GENOMIC DNA] OF 1-190</scope>
    <source>
        <strain>SPX101-1C</strain>
    </source>
</reference>
<gene>
    <name type="primary">SGA1</name>
    <name type="synonym">SGA</name>
    <name type="ordered locus">YIL099W</name>
</gene>
<name>AMYG_YEAST</name>
<organism>
    <name type="scientific">Saccharomyces cerevisiae (strain ATCC 204508 / S288c)</name>
    <name type="common">Baker's yeast</name>
    <dbReference type="NCBI Taxonomy" id="559292"/>
    <lineage>
        <taxon>Eukaryota</taxon>
        <taxon>Fungi</taxon>
        <taxon>Dikarya</taxon>
        <taxon>Ascomycota</taxon>
        <taxon>Saccharomycotina</taxon>
        <taxon>Saccharomycetes</taxon>
        <taxon>Saccharomycetales</taxon>
        <taxon>Saccharomycetaceae</taxon>
        <taxon>Saccharomyces</taxon>
    </lineage>
</organism>
<dbReference type="EC" id="3.2.1.3"/>
<dbReference type="EMBL" id="Z38125">
    <property type="protein sequence ID" value="CAA86282.1"/>
    <property type="molecule type" value="Genomic_DNA"/>
</dbReference>
<dbReference type="EMBL" id="M16166">
    <property type="protein sequence ID" value="AAA35042.1"/>
    <property type="molecule type" value="Genomic_DNA"/>
</dbReference>
<dbReference type="EMBL" id="X13858">
    <property type="protein sequence ID" value="CAA32071.1"/>
    <property type="molecule type" value="Genomic_DNA"/>
</dbReference>
<dbReference type="EMBL" id="BK006942">
    <property type="protein sequence ID" value="DAA08454.1"/>
    <property type="molecule type" value="Genomic_DNA"/>
</dbReference>
<dbReference type="PIR" id="S48474">
    <property type="entry name" value="S48474"/>
</dbReference>
<dbReference type="RefSeq" id="NP_012167.3">
    <property type="nucleotide sequence ID" value="NM_001179447.3"/>
</dbReference>
<dbReference type="SMR" id="P08019"/>
<dbReference type="BioGRID" id="34892">
    <property type="interactions" value="30"/>
</dbReference>
<dbReference type="FunCoup" id="P08019">
    <property type="interactions" value="155"/>
</dbReference>
<dbReference type="IntAct" id="P08019">
    <property type="interactions" value="1"/>
</dbReference>
<dbReference type="MINT" id="P08019"/>
<dbReference type="STRING" id="4932.YIL099W"/>
<dbReference type="BindingDB" id="P08019"/>
<dbReference type="ChEMBL" id="CHEMBL1075248"/>
<dbReference type="CAZy" id="GH15">
    <property type="family name" value="Glycoside Hydrolase Family 15"/>
</dbReference>
<dbReference type="PaxDb" id="4932-YIL099W"/>
<dbReference type="PeptideAtlas" id="P08019"/>
<dbReference type="EnsemblFungi" id="YIL099W_mRNA">
    <property type="protein sequence ID" value="YIL099W"/>
    <property type="gene ID" value="YIL099W"/>
</dbReference>
<dbReference type="GeneID" id="854708"/>
<dbReference type="KEGG" id="sce:YIL099W"/>
<dbReference type="AGR" id="SGD:S000001361"/>
<dbReference type="SGD" id="S000001361">
    <property type="gene designation" value="SGA1"/>
</dbReference>
<dbReference type="VEuPathDB" id="FungiDB:YIL099W"/>
<dbReference type="eggNOG" id="ENOG502QPM2">
    <property type="taxonomic scope" value="Eukaryota"/>
</dbReference>
<dbReference type="HOGENOM" id="CLU_012173_2_0_1"/>
<dbReference type="InParanoid" id="P08019"/>
<dbReference type="OMA" id="SHFWNQS"/>
<dbReference type="OrthoDB" id="6123450at2759"/>
<dbReference type="BioCyc" id="MetaCyc:YIL099W-MONOMER"/>
<dbReference type="BioCyc" id="YEAST:YIL099W-MONOMER"/>
<dbReference type="BioGRID-ORCS" id="854708">
    <property type="hits" value="2 hits in 10 CRISPR screens"/>
</dbReference>
<dbReference type="PRO" id="PR:P08019"/>
<dbReference type="Proteomes" id="UP000002311">
    <property type="component" value="Chromosome IX"/>
</dbReference>
<dbReference type="RNAct" id="P08019">
    <property type="molecule type" value="protein"/>
</dbReference>
<dbReference type="GO" id="GO:0000324">
    <property type="term" value="C:fungal-type vacuole"/>
    <property type="evidence" value="ECO:0000314"/>
    <property type="project" value="SGD"/>
</dbReference>
<dbReference type="GO" id="GO:0005628">
    <property type="term" value="C:prospore membrane"/>
    <property type="evidence" value="ECO:0007005"/>
    <property type="project" value="SGD"/>
</dbReference>
<dbReference type="GO" id="GO:0004339">
    <property type="term" value="F:glucan 1,4-alpha-glucosidase activity"/>
    <property type="evidence" value="ECO:0000314"/>
    <property type="project" value="SGD"/>
</dbReference>
<dbReference type="GO" id="GO:0004553">
    <property type="term" value="F:hydrolase activity, hydrolyzing O-glycosyl compounds"/>
    <property type="evidence" value="ECO:0000318"/>
    <property type="project" value="GO_Central"/>
</dbReference>
<dbReference type="GO" id="GO:0005980">
    <property type="term" value="P:glycogen catabolic process"/>
    <property type="evidence" value="ECO:0000315"/>
    <property type="project" value="SGD"/>
</dbReference>
<dbReference type="GO" id="GO:0030435">
    <property type="term" value="P:sporulation resulting in formation of a cellular spore"/>
    <property type="evidence" value="ECO:0007669"/>
    <property type="project" value="UniProtKB-KW"/>
</dbReference>
<dbReference type="FunFam" id="1.50.10.10:FF:000077">
    <property type="entry name" value="Sga1p"/>
    <property type="match status" value="1"/>
</dbReference>
<dbReference type="Gene3D" id="1.50.10.10">
    <property type="match status" value="1"/>
</dbReference>
<dbReference type="InterPro" id="IPR008928">
    <property type="entry name" value="6-hairpin_glycosidase_sf"/>
</dbReference>
<dbReference type="InterPro" id="IPR012341">
    <property type="entry name" value="6hp_glycosidase-like_sf"/>
</dbReference>
<dbReference type="InterPro" id="IPR011613">
    <property type="entry name" value="GH15-like"/>
</dbReference>
<dbReference type="InterPro" id="IPR000165">
    <property type="entry name" value="Glucoamylase"/>
</dbReference>
<dbReference type="InterPro" id="IPR046966">
    <property type="entry name" value="Glucoamylase_active_site"/>
</dbReference>
<dbReference type="PANTHER" id="PTHR31616:SF9">
    <property type="entry name" value="GLUCOAMYLASE, INTRACELLULAR SPORULATION-SPECIFIC"/>
    <property type="match status" value="1"/>
</dbReference>
<dbReference type="PANTHER" id="PTHR31616">
    <property type="entry name" value="TREHALASE"/>
    <property type="match status" value="1"/>
</dbReference>
<dbReference type="Pfam" id="PF00723">
    <property type="entry name" value="Glyco_hydro_15"/>
    <property type="match status" value="1"/>
</dbReference>
<dbReference type="PRINTS" id="PR00736">
    <property type="entry name" value="GLHYDRLASE15"/>
</dbReference>
<dbReference type="SUPFAM" id="SSF48208">
    <property type="entry name" value="Six-hairpin glycosidases"/>
    <property type="match status" value="1"/>
</dbReference>
<dbReference type="PROSITE" id="PS00820">
    <property type="entry name" value="GLUCOAMYLASE"/>
    <property type="match status" value="1"/>
</dbReference>
<accession>P08019</accession>
<accession>D6VVI8</accession>
<accession>Q07070</accession>
<evidence type="ECO:0000250" key="1"/>
<evidence type="ECO:0000255" key="2">
    <source>
        <dbReference type="PROSITE-ProRule" id="PRU10051"/>
    </source>
</evidence>
<evidence type="ECO:0000305" key="3"/>
<comment type="catalytic activity">
    <reaction>
        <text>Hydrolysis of terminal (1-&gt;4)-linked alpha-D-glucose residues successively from non-reducing ends of the chains with release of beta-D-glucose.</text>
        <dbReference type="EC" id="3.2.1.3"/>
    </reaction>
</comment>
<comment type="similarity">
    <text evidence="3">Belongs to the glycosyl hydrolase 15 family.</text>
</comment>
<proteinExistence type="inferred from homology"/>
<keyword id="KW-0119">Carbohydrate metabolism</keyword>
<keyword id="KW-0326">Glycosidase</keyword>
<keyword id="KW-0378">Hydrolase</keyword>
<keyword id="KW-0624">Polysaccharide degradation</keyword>
<keyword id="KW-1185">Reference proteome</keyword>
<keyword id="KW-0749">Sporulation</keyword>
<protein>
    <recommendedName>
        <fullName>Glucoamylase, intracellular sporulation-specific</fullName>
        <ecNumber>3.2.1.3</ecNumber>
    </recommendedName>
    <alternativeName>
        <fullName>1,4-alpha-D-glucan glucohydrolase</fullName>
    </alternativeName>
    <alternativeName>
        <fullName>Glucan 1,4-alpha-glucosidase</fullName>
    </alternativeName>
</protein>